<proteinExistence type="inferred from homology"/>
<protein>
    <recommendedName>
        <fullName evidence="1">Peptide chain release factor 2</fullName>
        <shortName evidence="1">RF-2</shortName>
    </recommendedName>
</protein>
<dbReference type="EMBL" id="CU928161">
    <property type="protein sequence ID" value="CAR04407.2"/>
    <property type="molecule type" value="Genomic_DNA"/>
</dbReference>
<dbReference type="RefSeq" id="WP_001701073.1">
    <property type="nucleotide sequence ID" value="NC_011742.1"/>
</dbReference>
<dbReference type="SMR" id="B7MM78"/>
<dbReference type="GeneID" id="93779111"/>
<dbReference type="KEGG" id="ecz:ECS88_3171"/>
<dbReference type="HOGENOM" id="CLU_220733_1_0_6"/>
<dbReference type="Proteomes" id="UP000000747">
    <property type="component" value="Chromosome"/>
</dbReference>
<dbReference type="GO" id="GO:0005737">
    <property type="term" value="C:cytoplasm"/>
    <property type="evidence" value="ECO:0007669"/>
    <property type="project" value="UniProtKB-SubCell"/>
</dbReference>
<dbReference type="GO" id="GO:0016149">
    <property type="term" value="F:translation release factor activity, codon specific"/>
    <property type="evidence" value="ECO:0007669"/>
    <property type="project" value="UniProtKB-UniRule"/>
</dbReference>
<dbReference type="FunFam" id="1.20.58.410:FF:000001">
    <property type="entry name" value="Peptide chain release factor 2"/>
    <property type="match status" value="1"/>
</dbReference>
<dbReference type="FunFam" id="3.30.160.20:FF:000010">
    <property type="entry name" value="Peptide chain release factor 2"/>
    <property type="match status" value="1"/>
</dbReference>
<dbReference type="Gene3D" id="3.30.160.20">
    <property type="match status" value="1"/>
</dbReference>
<dbReference type="Gene3D" id="3.30.70.1660">
    <property type="match status" value="1"/>
</dbReference>
<dbReference type="Gene3D" id="1.20.58.410">
    <property type="entry name" value="Release factor"/>
    <property type="match status" value="1"/>
</dbReference>
<dbReference type="HAMAP" id="MF_00094">
    <property type="entry name" value="Rel_fac_2"/>
    <property type="match status" value="1"/>
</dbReference>
<dbReference type="InterPro" id="IPR005139">
    <property type="entry name" value="PCRF"/>
</dbReference>
<dbReference type="InterPro" id="IPR000352">
    <property type="entry name" value="Pep_chain_release_fac_I"/>
</dbReference>
<dbReference type="InterPro" id="IPR045853">
    <property type="entry name" value="Pep_chain_release_fac_I_sf"/>
</dbReference>
<dbReference type="InterPro" id="IPR004374">
    <property type="entry name" value="PrfB"/>
</dbReference>
<dbReference type="NCBIfam" id="TIGR00020">
    <property type="entry name" value="prfB"/>
    <property type="match status" value="1"/>
</dbReference>
<dbReference type="PANTHER" id="PTHR43116:SF3">
    <property type="entry name" value="CLASS I PEPTIDE CHAIN RELEASE FACTOR"/>
    <property type="match status" value="1"/>
</dbReference>
<dbReference type="PANTHER" id="PTHR43116">
    <property type="entry name" value="PEPTIDE CHAIN RELEASE FACTOR 2"/>
    <property type="match status" value="1"/>
</dbReference>
<dbReference type="Pfam" id="PF03462">
    <property type="entry name" value="PCRF"/>
    <property type="match status" value="1"/>
</dbReference>
<dbReference type="Pfam" id="PF00472">
    <property type="entry name" value="RF-1"/>
    <property type="match status" value="1"/>
</dbReference>
<dbReference type="SMART" id="SM00937">
    <property type="entry name" value="PCRF"/>
    <property type="match status" value="1"/>
</dbReference>
<dbReference type="SUPFAM" id="SSF75620">
    <property type="entry name" value="Release factor"/>
    <property type="match status" value="1"/>
</dbReference>
<dbReference type="PROSITE" id="PS00745">
    <property type="entry name" value="RF_PROK_I"/>
    <property type="match status" value="1"/>
</dbReference>
<keyword id="KW-0963">Cytoplasm</keyword>
<keyword id="KW-0488">Methylation</keyword>
<keyword id="KW-0648">Protein biosynthesis</keyword>
<keyword id="KW-1185">Reference proteome</keyword>
<name>RF2_ECO45</name>
<evidence type="ECO:0000255" key="1">
    <source>
        <dbReference type="HAMAP-Rule" id="MF_00094"/>
    </source>
</evidence>
<accession>B7MM78</accession>
<gene>
    <name evidence="1" type="primary">prfB</name>
    <name type="ordered locus">ECS88_3171</name>
</gene>
<comment type="function">
    <text evidence="1">Peptide chain release factor 2 directs the termination of translation in response to the peptide chain termination codons UGA and UAA.</text>
</comment>
<comment type="subcellular location">
    <subcellularLocation>
        <location evidence="1">Cytoplasm</location>
    </subcellularLocation>
</comment>
<comment type="PTM">
    <text evidence="1">Methylated by PrmC. Methylation increases the termination efficiency of RF2.</text>
</comment>
<comment type="similarity">
    <text evidence="1">Belongs to the prokaryotic/mitochondrial release factor family.</text>
</comment>
<reference key="1">
    <citation type="journal article" date="2009" name="PLoS Genet.">
        <title>Organised genome dynamics in the Escherichia coli species results in highly diverse adaptive paths.</title>
        <authorList>
            <person name="Touchon M."/>
            <person name="Hoede C."/>
            <person name="Tenaillon O."/>
            <person name="Barbe V."/>
            <person name="Baeriswyl S."/>
            <person name="Bidet P."/>
            <person name="Bingen E."/>
            <person name="Bonacorsi S."/>
            <person name="Bouchier C."/>
            <person name="Bouvet O."/>
            <person name="Calteau A."/>
            <person name="Chiapello H."/>
            <person name="Clermont O."/>
            <person name="Cruveiller S."/>
            <person name="Danchin A."/>
            <person name="Diard M."/>
            <person name="Dossat C."/>
            <person name="Karoui M.E."/>
            <person name="Frapy E."/>
            <person name="Garry L."/>
            <person name="Ghigo J.M."/>
            <person name="Gilles A.M."/>
            <person name="Johnson J."/>
            <person name="Le Bouguenec C."/>
            <person name="Lescat M."/>
            <person name="Mangenot S."/>
            <person name="Martinez-Jehanne V."/>
            <person name="Matic I."/>
            <person name="Nassif X."/>
            <person name="Oztas S."/>
            <person name="Petit M.A."/>
            <person name="Pichon C."/>
            <person name="Rouy Z."/>
            <person name="Ruf C.S."/>
            <person name="Schneider D."/>
            <person name="Tourret J."/>
            <person name="Vacherie B."/>
            <person name="Vallenet D."/>
            <person name="Medigue C."/>
            <person name="Rocha E.P.C."/>
            <person name="Denamur E."/>
        </authorList>
    </citation>
    <scope>NUCLEOTIDE SEQUENCE [LARGE SCALE GENOMIC DNA]</scope>
    <source>
        <strain>S88 / ExPEC</strain>
    </source>
</reference>
<organism>
    <name type="scientific">Escherichia coli O45:K1 (strain S88 / ExPEC)</name>
    <dbReference type="NCBI Taxonomy" id="585035"/>
    <lineage>
        <taxon>Bacteria</taxon>
        <taxon>Pseudomonadati</taxon>
        <taxon>Pseudomonadota</taxon>
        <taxon>Gammaproteobacteria</taxon>
        <taxon>Enterobacterales</taxon>
        <taxon>Enterobacteriaceae</taxon>
        <taxon>Escherichia</taxon>
    </lineage>
</organism>
<feature type="chain" id="PRO_1000117258" description="Peptide chain release factor 2">
    <location>
        <begin position="1"/>
        <end position="365"/>
    </location>
</feature>
<feature type="modified residue" description="N5-methylglutamine" evidence="1">
    <location>
        <position position="252"/>
    </location>
</feature>
<sequence length="365" mass="41221">MFEINPVNNRIQDLTERSDVLRGYLDYDAKKERLEEVNAELEQPDVWNEPERAQALGKERSSLEAVVDTLDQMKQGLEDVSGLLELAVEADDEETFNEAVAELDALEEKLAQLEFRRMFSGEYDSADCYLDIQAGSGGTEAQDWASMLERMYLRWAESRGFKTEIIEESEGEVAGIKSVTIKISGDYAYGWLRTETGVHRLVRKSPFDSGGRRHTSFSSAFVYPEVDDDIDIEINPADLRIDVYRASGAGGQHVNRTESAVRITHIPTGIVTQCQNDRSQHKNKDQAMKQMKAKLYELEMQKKNAEKQAMEDNKSDIGWGSQIRSYVLDDSRIKDLRTGVETRNTQAVLDGSLDQFIEASLKAGL</sequence>